<organism>
    <name type="scientific">Danio rerio</name>
    <name type="common">Zebrafish</name>
    <name type="synonym">Brachydanio rerio</name>
    <dbReference type="NCBI Taxonomy" id="7955"/>
    <lineage>
        <taxon>Eukaryota</taxon>
        <taxon>Metazoa</taxon>
        <taxon>Chordata</taxon>
        <taxon>Craniata</taxon>
        <taxon>Vertebrata</taxon>
        <taxon>Euteleostomi</taxon>
        <taxon>Actinopterygii</taxon>
        <taxon>Neopterygii</taxon>
        <taxon>Teleostei</taxon>
        <taxon>Ostariophysi</taxon>
        <taxon>Cypriniformes</taxon>
        <taxon>Danionidae</taxon>
        <taxon>Danioninae</taxon>
        <taxon>Danio</taxon>
    </lineage>
</organism>
<feature type="chain" id="PRO_0000305696" description="Mediator of RNA polymerase II transcription subunit 28">
    <location>
        <begin position="1"/>
        <end position="179"/>
    </location>
</feature>
<feature type="region of interest" description="Disordered" evidence="3">
    <location>
        <begin position="1"/>
        <end position="43"/>
    </location>
</feature>
<feature type="coiled-coil region" evidence="2">
    <location>
        <begin position="109"/>
        <end position="139"/>
    </location>
</feature>
<feature type="compositionally biased region" description="Pro residues" evidence="3">
    <location>
        <begin position="12"/>
        <end position="26"/>
    </location>
</feature>
<keyword id="KW-0010">Activator</keyword>
<keyword id="KW-0175">Coiled coil</keyword>
<keyword id="KW-0539">Nucleus</keyword>
<keyword id="KW-1185">Reference proteome</keyword>
<keyword id="KW-0804">Transcription</keyword>
<keyword id="KW-0805">Transcription regulation</keyword>
<protein>
    <recommendedName>
        <fullName>Mediator of RNA polymerase II transcription subunit 28</fullName>
    </recommendedName>
    <alternativeName>
        <fullName>Mediator complex subunit 28</fullName>
    </alternativeName>
</protein>
<name>MED28_DANRE</name>
<sequence length="179" mass="19697">MASSMCGMFPGQQPPGSLPPPGPGGPGQPGLLTGTPGNRGANNTLVDELEASFEACFASLVSQDYVNGTDQEEIRTGVDQCIQKFLDVARQTECFFLQKRLQLSVQKPEQVEKEDASELKNELQRKEMLIQKHLAKIHHWQQVLEDINVQHKKPTELPQGPLAFLEQASANLPAPMKPN</sequence>
<evidence type="ECO:0000250" key="1"/>
<evidence type="ECO:0000255" key="2"/>
<evidence type="ECO:0000256" key="3">
    <source>
        <dbReference type="SAM" id="MobiDB-lite"/>
    </source>
</evidence>
<evidence type="ECO:0000305" key="4"/>
<reference key="1">
    <citation type="submission" date="2004-11" db="EMBL/GenBank/DDBJ databases">
        <authorList>
            <consortium name="NIH - Zebrafish Gene Collection (ZGC) project"/>
        </authorList>
    </citation>
    <scope>NUCLEOTIDE SEQUENCE [LARGE SCALE MRNA]</scope>
    <source>
        <tissue>Larva</tissue>
    </source>
</reference>
<comment type="function">
    <text evidence="1">Component of the Mediator complex, a coactivator involved in the regulated transcription of nearly all RNA polymerase II-dependent genes. Mediator functions as a bridge to convey information from gene-specific regulatory proteins to the basal RNA polymerase II transcription machinery. Mediator is recruited to promoters by direct interactions with regulatory proteins and serves as a scaffold for the assembly of a functional preinitiation complex with RNA polymerase II and the general transcription factors (By similarity).</text>
</comment>
<comment type="subunit">
    <text evidence="1">Component of the Mediator complex.</text>
</comment>
<comment type="subcellular location">
    <subcellularLocation>
        <location evidence="1">Nucleus</location>
    </subcellularLocation>
</comment>
<comment type="similarity">
    <text evidence="4">Belongs to the Mediator complex subunit 28 family.</text>
</comment>
<accession>Q5RKN3</accession>
<proteinExistence type="evidence at transcript level"/>
<gene>
    <name type="primary">med28</name>
    <name type="ORF">zgc:103633</name>
</gene>
<dbReference type="EMBL" id="BC085569">
    <property type="protein sequence ID" value="AAH85569.1"/>
    <property type="molecule type" value="mRNA"/>
</dbReference>
<dbReference type="RefSeq" id="NP_001007771.1">
    <property type="nucleotide sequence ID" value="NM_001007770.1"/>
</dbReference>
<dbReference type="SMR" id="Q5RKN3"/>
<dbReference type="FunCoup" id="Q5RKN3">
    <property type="interactions" value="1443"/>
</dbReference>
<dbReference type="STRING" id="7955.ENSDARP00000054441"/>
<dbReference type="PaxDb" id="7955-ENSDARP00000054441"/>
<dbReference type="GeneID" id="493610"/>
<dbReference type="KEGG" id="dre:493610"/>
<dbReference type="AGR" id="ZFIN:ZDB-GENE-041121-4"/>
<dbReference type="CTD" id="80306"/>
<dbReference type="ZFIN" id="ZDB-GENE-041121-4">
    <property type="gene designation" value="med28"/>
</dbReference>
<dbReference type="eggNOG" id="ENOG502QSN9">
    <property type="taxonomic scope" value="Eukaryota"/>
</dbReference>
<dbReference type="InParanoid" id="Q5RKN3"/>
<dbReference type="OrthoDB" id="2286203at2759"/>
<dbReference type="PhylomeDB" id="Q5RKN3"/>
<dbReference type="PRO" id="PR:Q5RKN3"/>
<dbReference type="Proteomes" id="UP000000437">
    <property type="component" value="Alternate scaffold 1"/>
</dbReference>
<dbReference type="Proteomes" id="UP000000437">
    <property type="component" value="Chromosome 1"/>
</dbReference>
<dbReference type="GO" id="GO:0016592">
    <property type="term" value="C:mediator complex"/>
    <property type="evidence" value="ECO:0000318"/>
    <property type="project" value="GO_Central"/>
</dbReference>
<dbReference type="InterPro" id="IPR021640">
    <property type="entry name" value="Mediator_Med28"/>
</dbReference>
<dbReference type="PANTHER" id="PTHR13512">
    <property type="entry name" value="MEDIATOR COMPLEX SUBUNIT 28"/>
    <property type="match status" value="1"/>
</dbReference>
<dbReference type="PANTHER" id="PTHR13512:SF2">
    <property type="entry name" value="MEDIATOR OF RNA POLYMERASE II TRANSCRIPTION SUBUNIT 28"/>
    <property type="match status" value="1"/>
</dbReference>
<dbReference type="Pfam" id="PF11594">
    <property type="entry name" value="Med28"/>
    <property type="match status" value="1"/>
</dbReference>